<accession>B3EWK7</accession>
<evidence type="ECO:0000269" key="1">
    <source>
    </source>
</evidence>
<evidence type="ECO:0000303" key="2">
    <source>
    </source>
</evidence>
<evidence type="ECO:0000305" key="3"/>
<reference evidence="3" key="1">
    <citation type="journal article" date="2010" name="Neuropeptides">
        <title>Mass spectrometric analysis of activity-dependent changes of neuropeptide profile in the snail, Helix pomatia.</title>
        <authorList>
            <person name="Pirger Z."/>
            <person name="Lubics A."/>
            <person name="Reglodi D."/>
            <person name="Laszlo Z."/>
            <person name="Mark L."/>
            <person name="Kiss T."/>
        </authorList>
    </citation>
    <scope>PROTEIN SEQUENCE</scope>
    <scope>FUNCTION</scope>
    <scope>MASS SPECTROMETRY</scope>
    <source>
        <tissue evidence="1">CNS</tissue>
    </source>
</reference>
<sequence length="13" mass="1110">GSGASGSMPATTS</sequence>
<comment type="function">
    <text evidence="1">Up-regulated in CNS of active, non-hibernating snails suggesting involvement in the regulation of hibernation and maintenance of the active state.</text>
</comment>
<comment type="mass spectrometry" mass="1110.75" method="MALDI" evidence="1"/>
<protein>
    <recommendedName>
        <fullName evidence="2">Activity-dependent peptide</fullName>
    </recommendedName>
</protein>
<feature type="chain" id="PRO_0000418107" description="Activity-dependent peptide">
    <location>
        <begin position="1"/>
        <end position="13" status="greater than"/>
    </location>
</feature>
<feature type="non-terminal residue" evidence="2">
    <location>
        <position position="13"/>
    </location>
</feature>
<organism>
    <name type="scientific">Helix pomatia</name>
    <name type="common">Roman snail</name>
    <name type="synonym">Edible snail</name>
    <dbReference type="NCBI Taxonomy" id="6536"/>
    <lineage>
        <taxon>Eukaryota</taxon>
        <taxon>Metazoa</taxon>
        <taxon>Spiralia</taxon>
        <taxon>Lophotrochozoa</taxon>
        <taxon>Mollusca</taxon>
        <taxon>Gastropoda</taxon>
        <taxon>Heterobranchia</taxon>
        <taxon>Euthyneura</taxon>
        <taxon>Panpulmonata</taxon>
        <taxon>Eupulmonata</taxon>
        <taxon>Stylommatophora</taxon>
        <taxon>Helicina</taxon>
        <taxon>Helicoidea</taxon>
        <taxon>Helicidae</taxon>
        <taxon>Helix</taxon>
    </lineage>
</organism>
<name>AP_HELPO</name>
<keyword id="KW-0903">Direct protein sequencing</keyword>
<keyword id="KW-0909">Hibernation</keyword>
<dbReference type="GO" id="GO:0042750">
    <property type="term" value="P:hibernation"/>
    <property type="evidence" value="ECO:0007669"/>
    <property type="project" value="UniProtKB-KW"/>
</dbReference>
<proteinExistence type="evidence at protein level"/>